<organism>
    <name type="scientific">Homo sapiens</name>
    <name type="common">Human</name>
    <dbReference type="NCBI Taxonomy" id="9606"/>
    <lineage>
        <taxon>Eukaryota</taxon>
        <taxon>Metazoa</taxon>
        <taxon>Chordata</taxon>
        <taxon>Craniata</taxon>
        <taxon>Vertebrata</taxon>
        <taxon>Euteleostomi</taxon>
        <taxon>Mammalia</taxon>
        <taxon>Eutheria</taxon>
        <taxon>Euarchontoglires</taxon>
        <taxon>Primates</taxon>
        <taxon>Haplorrhini</taxon>
        <taxon>Catarrhini</taxon>
        <taxon>Hominidae</taxon>
        <taxon>Homo</taxon>
    </lineage>
</organism>
<sequence length="385" mass="42876">MAAVVAATALKGRGARNARVLRGILAGATANKASHNRTRALQSHSSPEGKEEPEPLSPELEYIPRKRGKNPMKAVGLAWYSLYTRTWLGYLFYRQQLRRARNRYPKGHSKTQPRLFNGVKVLPIPVLSDNYSYLIIDTQAQLAVAVDPSDPRAVQASIEKEGVTLVAILCTHKHWDHSGGNRDLSRRHRDCRVYGSPQDGIPYLTHPLCHQDVVSVGRLQIRALATPGHTQGHLVYLLDGEPYKGPSCLFSGDLLFLSGCGRTFEGNAETMLSSLDTVLGLGDDTLLWPGHEYAEENLGFAGVVEPENLARERKMQWVQRQRLERKGTCPSTLGEERSYNPFLRTHCLALQEALGPGPGPTGDDDYSRAQLLEELRRLKDMHKSK</sequence>
<comment type="function">
    <text evidence="11 20">Probable thioesterase that may play a role in cellular detoxification processes; it likely acts on a yet-unknown alpha-hydroxythioester substrate (Probable). In vitro, it is able to catalyze the hydrolysis of S-D-lactoyl-glutathione to form glutathione and D-lactic acid at very low rate, though this reaction is not physiologically relevant in vivo (PubMed:21487022).</text>
</comment>
<comment type="catalytic activity">
    <reaction evidence="20">
        <text>a thioester + H2O = a thiol + a carboxylate + H(+)</text>
        <dbReference type="Rhea" id="RHEA:82919"/>
        <dbReference type="ChEBI" id="CHEBI:15377"/>
        <dbReference type="ChEBI" id="CHEBI:15378"/>
        <dbReference type="ChEBI" id="CHEBI:29067"/>
        <dbReference type="ChEBI" id="CHEBI:29256"/>
        <dbReference type="ChEBI" id="CHEBI:51277"/>
    </reaction>
</comment>
<comment type="cofactor">
    <cofactor evidence="1">
        <name>Zn(2+)</name>
        <dbReference type="ChEBI" id="CHEBI:29105"/>
    </cofactor>
    <text evidence="1">Binds 2 Zn(2+) ions per subunit.</text>
</comment>
<comment type="subunit">
    <text evidence="3">Isoform 2 interacts with the sarcomeric proteins, MRLC2, MYOM1 and ENO3.</text>
</comment>
<comment type="interaction">
    <interactant intactId="EBI-746368">
        <id>Q8N490</id>
    </interactant>
    <interactant intactId="EBI-4397613">
        <id>Q7L273</id>
        <label>KCTD9</label>
    </interactant>
    <organismsDiffer>false</organismsDiffer>
    <experiments>3</experiments>
</comment>
<comment type="interaction">
    <interactant intactId="EBI-746368">
        <id>Q8N490</id>
    </interactant>
    <interactant intactId="EBI-11525615">
        <id>G5E962</id>
        <label>MAGEA11</label>
    </interactant>
    <organismsDiffer>false</organismsDiffer>
    <experiments>3</experiments>
</comment>
<comment type="interaction">
    <interactant intactId="EBI-746368">
        <id>Q8N490</id>
    </interactant>
    <interactant intactId="EBI-10178634">
        <id>P43364-2</id>
        <label>MAGEA11</label>
    </interactant>
    <organismsDiffer>false</organismsDiffer>
    <experiments>3</experiments>
</comment>
<comment type="interaction">
    <interactant intactId="EBI-746368">
        <id>Q8N490</id>
    </interactant>
    <interactant intactId="EBI-73995">
        <id>P27361</id>
        <label>MAPK3</label>
    </interactant>
    <organismsDiffer>false</organismsDiffer>
    <experiments>4</experiments>
</comment>
<comment type="interaction">
    <interactant intactId="EBI-25879276">
        <id>Q8N490-3</id>
    </interactant>
    <interactant intactId="EBI-948266">
        <id>O14901</id>
        <label>KLF11</label>
    </interactant>
    <organismsDiffer>false</organismsDiffer>
    <experiments>3</experiments>
</comment>
<comment type="interaction">
    <interactant intactId="EBI-25879276">
        <id>Q8N490-3</id>
    </interactant>
    <interactant intactId="EBI-2811583">
        <id>Q9BVL2</id>
        <label>NUP58</label>
    </interactant>
    <organismsDiffer>false</organismsDiffer>
    <experiments>3</experiments>
</comment>
<comment type="interaction">
    <interactant intactId="EBI-25879276">
        <id>Q8N490-3</id>
    </interactant>
    <interactant intactId="EBI-1307">
        <id>Q13153</id>
        <label>PAK1</label>
    </interactant>
    <organismsDiffer>false</organismsDiffer>
    <experiments>3</experiments>
</comment>
<comment type="subcellular location">
    <molecule>Isoform 1</molecule>
    <subcellularLocation>
        <location evidence="6 11">Cell membrane</location>
        <topology>Peripheral membrane protein</topology>
    </subcellularLocation>
    <subcellularLocation>
        <location evidence="10">Mitochondrion</location>
    </subcellularLocation>
</comment>
<comment type="subcellular location">
    <molecule>Isoform 2</molecule>
    <subcellularLocation>
        <location evidence="6">Cytoplasm</location>
    </subcellularLocation>
    <subcellularLocation>
        <location evidence="10">Mitochondrion</location>
    </subcellularLocation>
</comment>
<comment type="subcellular location">
    <molecule>Isoform 3</molecule>
    <subcellularLocation>
        <location evidence="6">Mitochondrion</location>
    </subcellularLocation>
    <subcellularLocation>
        <location evidence="10">Golgi apparatus</location>
    </subcellularLocation>
    <subcellularLocation>
        <location evidence="10">Endoplasmic reticulum</location>
    </subcellularLocation>
</comment>
<comment type="alternative products">
    <event type="alternative splicing"/>
    <isoform>
        <id>Q8N490-1</id>
        <name>1</name>
        <name>MR-1L</name>
        <sequence type="displayed"/>
    </isoform>
    <isoform>
        <id>Q8N490-2</id>
        <name>2</name>
        <name>MR-1S</name>
        <sequence type="described" ref="VSP_027739 VSP_027740"/>
    </isoform>
    <isoform>
        <id>Q8N490-3</id>
        <name>3</name>
        <name>MR-1M</name>
        <sequence type="described" ref="VSP_027736"/>
    </isoform>
    <isoform>
        <id>Q8N490-4</id>
        <name>4</name>
        <sequence type="described" ref="VSP_027737 VSP_027738"/>
    </isoform>
</comment>
<comment type="tissue specificity">
    <text evidence="3 5 6">Isoform 1 is only expressed in the brain. Isoform 2 is ubiquitously detected with highest expression in skeletal muscle and detected in myocardial myofibrils.</text>
</comment>
<comment type="induction">
    <text evidence="4">By Hepatitis C virus core protein.</text>
</comment>
<comment type="PTM">
    <text evidence="11">Undergoes cleavage at the N-terminus.</text>
</comment>
<comment type="disease" evidence="5 7 8 9 10 11 12">
    <disease id="DI-00417">
        <name>Paroxysmal non-kinesigenic dyskinesia 1</name>
        <acronym>PNKD1</acronym>
        <description>An autosomal dominant movement disorder characterized by attacks of dystonia, chorea, and athetosis. The attacks of involuntary movements are brought on by stress, alcohol, fatigue or caffeine, and generally last between a few seconds and four hours or longer. The attacks may begin in one limb and spread throughout the body, including the face.</description>
        <dbReference type="MIM" id="118800"/>
    </disease>
    <text>The disease is caused by variants affecting the gene represented in this entry.</text>
</comment>
<comment type="similarity">
    <text evidence="19">Belongs to the metallo-beta-lactamase superfamily. Glyoxalase II family.</text>
</comment>
<gene>
    <name type="primary">PNKD</name>
    <name type="synonym">KIAA1184</name>
    <name type="synonym">MR1</name>
    <name type="synonym">TAHCCP2</name>
    <name type="ORF">FKSG19</name>
    <name type="ORF">UNQ2491/PRO5778</name>
</gene>
<evidence type="ECO:0000250" key="1">
    <source>
        <dbReference type="UniProtKB" id="Q16775"/>
    </source>
</evidence>
<evidence type="ECO:0000256" key="2">
    <source>
        <dbReference type="SAM" id="MobiDB-lite"/>
    </source>
</evidence>
<evidence type="ECO:0000269" key="3">
    <source>
    </source>
</evidence>
<evidence type="ECO:0000269" key="4">
    <source>
    </source>
</evidence>
<evidence type="ECO:0000269" key="5">
    <source>
    </source>
</evidence>
<evidence type="ECO:0000269" key="6">
    <source>
    </source>
</evidence>
<evidence type="ECO:0000269" key="7">
    <source>
    </source>
</evidence>
<evidence type="ECO:0000269" key="8">
    <source>
    </source>
</evidence>
<evidence type="ECO:0000269" key="9">
    <source>
    </source>
</evidence>
<evidence type="ECO:0000269" key="10">
    <source>
    </source>
</evidence>
<evidence type="ECO:0000269" key="11">
    <source>
    </source>
</evidence>
<evidence type="ECO:0000269" key="12">
    <source>
    </source>
</evidence>
<evidence type="ECO:0000303" key="13">
    <source>
    </source>
</evidence>
<evidence type="ECO:0000303" key="14">
    <source>
    </source>
</evidence>
<evidence type="ECO:0000303" key="15">
    <source>
    </source>
</evidence>
<evidence type="ECO:0000303" key="16">
    <source>
    </source>
</evidence>
<evidence type="ECO:0000303" key="17">
    <source>
    </source>
</evidence>
<evidence type="ECO:0000303" key="18">
    <source ref="3"/>
</evidence>
<evidence type="ECO:0000305" key="19"/>
<evidence type="ECO:0000305" key="20">
    <source>
    </source>
</evidence>
<proteinExistence type="evidence at protein level"/>
<dbReference type="EC" id="3.1.2.-" evidence="20"/>
<dbReference type="EMBL" id="AF417001">
    <property type="protein sequence ID" value="AAL08573.1"/>
    <property type="molecule type" value="mRNA"/>
</dbReference>
<dbReference type="EMBL" id="AY039043">
    <property type="protein sequence ID" value="AAK83449.1"/>
    <property type="molecule type" value="mRNA"/>
</dbReference>
<dbReference type="EMBL" id="AF318057">
    <property type="protein sequence ID" value="AAL25716.1"/>
    <property type="molecule type" value="mRNA"/>
</dbReference>
<dbReference type="EMBL" id="AF390031">
    <property type="protein sequence ID" value="AAM73649.1"/>
    <property type="molecule type" value="Genomic_DNA"/>
</dbReference>
<dbReference type="EMBL" id="AY358753">
    <property type="protein sequence ID" value="AAQ89113.1"/>
    <property type="molecule type" value="mRNA"/>
</dbReference>
<dbReference type="EMBL" id="AK289867">
    <property type="protein sequence ID" value="BAF82556.1"/>
    <property type="molecule type" value="mRNA"/>
</dbReference>
<dbReference type="EMBL" id="AL080092">
    <property type="protein sequence ID" value="CAB45707.2"/>
    <property type="molecule type" value="mRNA"/>
</dbReference>
<dbReference type="EMBL" id="AL137675">
    <property type="protein sequence ID" value="CAB70870.2"/>
    <property type="molecule type" value="mRNA"/>
</dbReference>
<dbReference type="EMBL" id="CH471063">
    <property type="protein sequence ID" value="EAW70602.1"/>
    <property type="molecule type" value="Genomic_DNA"/>
</dbReference>
<dbReference type="EMBL" id="CH471063">
    <property type="protein sequence ID" value="EAW70604.1"/>
    <property type="molecule type" value="Genomic_DNA"/>
</dbReference>
<dbReference type="EMBL" id="BC002937">
    <property type="protein sequence ID" value="AAH02937.1"/>
    <property type="molecule type" value="mRNA"/>
</dbReference>
<dbReference type="EMBL" id="BC021118">
    <property type="protein sequence ID" value="AAH21118.1"/>
    <property type="molecule type" value="mRNA"/>
</dbReference>
<dbReference type="EMBL" id="BC036457">
    <property type="protein sequence ID" value="AAH36457.1"/>
    <property type="molecule type" value="mRNA"/>
</dbReference>
<dbReference type="EMBL" id="AB033010">
    <property type="protein sequence ID" value="BAA86498.1"/>
    <property type="molecule type" value="mRNA"/>
</dbReference>
<dbReference type="CCDS" id="CCDS2411.1">
    <molecule id="Q8N490-1"/>
</dbReference>
<dbReference type="CCDS" id="CCDS2413.1">
    <molecule id="Q8N490-3"/>
</dbReference>
<dbReference type="CCDS" id="CCDS42816.1">
    <molecule id="Q8N490-2"/>
</dbReference>
<dbReference type="PIR" id="T46495">
    <property type="entry name" value="T46495"/>
</dbReference>
<dbReference type="RefSeq" id="NP_001070867.1">
    <molecule id="Q8N490-2"/>
    <property type="nucleotide sequence ID" value="NM_001077399.3"/>
</dbReference>
<dbReference type="RefSeq" id="NP_056303.3">
    <molecule id="Q8N490-1"/>
    <property type="nucleotide sequence ID" value="NM_015488.4"/>
</dbReference>
<dbReference type="RefSeq" id="NP_072094.1">
    <molecule id="Q8N490-3"/>
    <property type="nucleotide sequence ID" value="NM_022572.4"/>
</dbReference>
<dbReference type="SMR" id="Q8N490"/>
<dbReference type="BioGRID" id="117446">
    <property type="interactions" value="143"/>
</dbReference>
<dbReference type="FunCoup" id="Q8N490">
    <property type="interactions" value="458"/>
</dbReference>
<dbReference type="IntAct" id="Q8N490">
    <property type="interactions" value="119"/>
</dbReference>
<dbReference type="MINT" id="Q8N490"/>
<dbReference type="STRING" id="9606.ENSP00000273077"/>
<dbReference type="GlyGen" id="Q8N490">
    <property type="glycosylation" value="2 sites"/>
</dbReference>
<dbReference type="iPTMnet" id="Q8N490"/>
<dbReference type="PhosphoSitePlus" id="Q8N490"/>
<dbReference type="SwissPalm" id="Q8N490"/>
<dbReference type="BioMuta" id="PNKD"/>
<dbReference type="DMDM" id="158563846"/>
<dbReference type="jPOST" id="Q8N490"/>
<dbReference type="MassIVE" id="Q8N490"/>
<dbReference type="PaxDb" id="9606-ENSP00000273077"/>
<dbReference type="PeptideAtlas" id="Q8N490"/>
<dbReference type="ProteomicsDB" id="71896">
    <molecule id="Q8N490-1"/>
</dbReference>
<dbReference type="ProteomicsDB" id="71897">
    <molecule id="Q8N490-2"/>
</dbReference>
<dbReference type="ProteomicsDB" id="71898">
    <molecule id="Q8N490-3"/>
</dbReference>
<dbReference type="ProteomicsDB" id="71899">
    <molecule id="Q8N490-4"/>
</dbReference>
<dbReference type="Pumba" id="Q8N490"/>
<dbReference type="Antibodypedia" id="2431">
    <property type="antibodies" value="131 antibodies from 25 providers"/>
</dbReference>
<dbReference type="DNASU" id="25953"/>
<dbReference type="Ensembl" id="ENST00000248451.7">
    <molecule id="Q8N490-2"/>
    <property type="protein sequence ID" value="ENSP00000248451.3"/>
    <property type="gene ID" value="ENSG00000127838.15"/>
</dbReference>
<dbReference type="Ensembl" id="ENST00000258362.7">
    <molecule id="Q8N490-3"/>
    <property type="protein sequence ID" value="ENSP00000258362.3"/>
    <property type="gene ID" value="ENSG00000127838.15"/>
</dbReference>
<dbReference type="Ensembl" id="ENST00000273077.9">
    <molecule id="Q8N490-1"/>
    <property type="protein sequence ID" value="ENSP00000273077.4"/>
    <property type="gene ID" value="ENSG00000127838.15"/>
</dbReference>
<dbReference type="GeneID" id="25953"/>
<dbReference type="KEGG" id="hsa:25953"/>
<dbReference type="MANE-Select" id="ENST00000273077.9">
    <property type="protein sequence ID" value="ENSP00000273077.4"/>
    <property type="RefSeq nucleotide sequence ID" value="NM_015488.5"/>
    <property type="RefSeq protein sequence ID" value="NP_056303.3"/>
</dbReference>
<dbReference type="UCSC" id="uc002vhm.2">
    <molecule id="Q8N490-1"/>
    <property type="organism name" value="human"/>
</dbReference>
<dbReference type="AGR" id="HGNC:9153"/>
<dbReference type="CTD" id="25953"/>
<dbReference type="DisGeNET" id="25953"/>
<dbReference type="GeneCards" id="PNKD"/>
<dbReference type="GeneReviews" id="PNKD"/>
<dbReference type="HGNC" id="HGNC:9153">
    <property type="gene designation" value="PNKD"/>
</dbReference>
<dbReference type="HPA" id="ENSG00000127838">
    <property type="expression patterns" value="Low tissue specificity"/>
</dbReference>
<dbReference type="MalaCards" id="PNKD"/>
<dbReference type="MIM" id="118800">
    <property type="type" value="phenotype"/>
</dbReference>
<dbReference type="MIM" id="609023">
    <property type="type" value="gene"/>
</dbReference>
<dbReference type="neXtProt" id="NX_Q8N490"/>
<dbReference type="OpenTargets" id="ENSG00000127838"/>
<dbReference type="Orphanet" id="98810">
    <property type="disease" value="Paroxysmal non-kinesigenic dyskinesia"/>
</dbReference>
<dbReference type="PharmGKB" id="PA33476"/>
<dbReference type="VEuPathDB" id="HostDB:ENSG00000127838"/>
<dbReference type="eggNOG" id="KOG0813">
    <property type="taxonomic scope" value="Eukaryota"/>
</dbReference>
<dbReference type="GeneTree" id="ENSGT00940000158887"/>
<dbReference type="HOGENOM" id="CLU_1815131_0_0_1"/>
<dbReference type="InParanoid" id="Q8N490"/>
<dbReference type="OMA" id="CVWPGMR"/>
<dbReference type="OrthoDB" id="449487at2759"/>
<dbReference type="PAN-GO" id="Q8N490">
    <property type="GO annotations" value="2 GO annotations based on evolutionary models"/>
</dbReference>
<dbReference type="PhylomeDB" id="Q8N490"/>
<dbReference type="TreeFam" id="TF105273"/>
<dbReference type="PathwayCommons" id="Q8N490"/>
<dbReference type="Reactome" id="R-HSA-9864848">
    <molecule id="Q8N490-2"/>
    <property type="pathway name" value="Complex IV assembly"/>
</dbReference>
<dbReference type="SignaLink" id="Q8N490"/>
<dbReference type="BioGRID-ORCS" id="25953">
    <property type="hits" value="19 hits in 1150 CRISPR screens"/>
</dbReference>
<dbReference type="CD-CODE" id="FB4E32DD">
    <property type="entry name" value="Presynaptic clusters and postsynaptic densities"/>
</dbReference>
<dbReference type="ChiTaRS" id="PNKD">
    <property type="organism name" value="human"/>
</dbReference>
<dbReference type="GeneWiki" id="PNKD"/>
<dbReference type="GenomeRNAi" id="25953"/>
<dbReference type="Pharos" id="Q8N490">
    <property type="development level" value="Tbio"/>
</dbReference>
<dbReference type="PRO" id="PR:Q8N490"/>
<dbReference type="Proteomes" id="UP000005640">
    <property type="component" value="Chromosome 2"/>
</dbReference>
<dbReference type="RNAct" id="Q8N490">
    <property type="molecule type" value="protein"/>
</dbReference>
<dbReference type="Bgee" id="ENSG00000127838">
    <property type="expression patterns" value="Expressed in metanephros cortex and 180 other cell types or tissues"/>
</dbReference>
<dbReference type="ExpressionAtlas" id="Q8N490">
    <property type="expression patterns" value="baseline and differential"/>
</dbReference>
<dbReference type="GO" id="GO:0005783">
    <property type="term" value="C:endoplasmic reticulum"/>
    <property type="evidence" value="ECO:0007669"/>
    <property type="project" value="UniProtKB-SubCell"/>
</dbReference>
<dbReference type="GO" id="GO:0005794">
    <property type="term" value="C:Golgi apparatus"/>
    <property type="evidence" value="ECO:0007669"/>
    <property type="project" value="UniProtKB-SubCell"/>
</dbReference>
<dbReference type="GO" id="GO:0016020">
    <property type="term" value="C:membrane"/>
    <property type="evidence" value="ECO:0000314"/>
    <property type="project" value="MGI"/>
</dbReference>
<dbReference type="GO" id="GO:0005739">
    <property type="term" value="C:mitochondrion"/>
    <property type="evidence" value="ECO:0000314"/>
    <property type="project" value="HPA"/>
</dbReference>
<dbReference type="GO" id="GO:0005634">
    <property type="term" value="C:nucleus"/>
    <property type="evidence" value="ECO:0007669"/>
    <property type="project" value="UniProtKB-KW"/>
</dbReference>
<dbReference type="GO" id="GO:0005886">
    <property type="term" value="C:plasma membrane"/>
    <property type="evidence" value="ECO:0007669"/>
    <property type="project" value="UniProtKB-SubCell"/>
</dbReference>
<dbReference type="GO" id="GO:0099523">
    <property type="term" value="C:presynaptic cytosol"/>
    <property type="evidence" value="ECO:0007669"/>
    <property type="project" value="Ensembl"/>
</dbReference>
<dbReference type="GO" id="GO:0004416">
    <property type="term" value="F:hydroxyacylglutathione hydrolase activity"/>
    <property type="evidence" value="ECO:0007669"/>
    <property type="project" value="InterPro"/>
</dbReference>
<dbReference type="GO" id="GO:0046872">
    <property type="term" value="F:metal ion binding"/>
    <property type="evidence" value="ECO:0007669"/>
    <property type="project" value="UniProtKB-KW"/>
</dbReference>
<dbReference type="GO" id="GO:0019243">
    <property type="term" value="P:methylglyoxal catabolic process to D-lactate via S-lactoyl-glutathione"/>
    <property type="evidence" value="ECO:0007669"/>
    <property type="project" value="InterPro"/>
</dbReference>
<dbReference type="GO" id="GO:0046929">
    <property type="term" value="P:negative regulation of neurotransmitter secretion"/>
    <property type="evidence" value="ECO:0000315"/>
    <property type="project" value="SynGO-UCL"/>
</dbReference>
<dbReference type="GO" id="GO:0050884">
    <property type="term" value="P:neuromuscular process controlling posture"/>
    <property type="evidence" value="ECO:0007669"/>
    <property type="project" value="Ensembl"/>
</dbReference>
<dbReference type="GO" id="GO:0042053">
    <property type="term" value="P:regulation of dopamine metabolic process"/>
    <property type="evidence" value="ECO:0007669"/>
    <property type="project" value="Ensembl"/>
</dbReference>
<dbReference type="GO" id="GO:0032225">
    <property type="term" value="P:regulation of synaptic transmission, dopaminergic"/>
    <property type="evidence" value="ECO:0007669"/>
    <property type="project" value="Ensembl"/>
</dbReference>
<dbReference type="CDD" id="cd07723">
    <property type="entry name" value="hydroxyacylglutathione_hydrolase_MBL-fold"/>
    <property type="match status" value="1"/>
</dbReference>
<dbReference type="FunFam" id="3.60.15.10:FF:000015">
    <property type="entry name" value="probable hydrolase PNKD isoform X1"/>
    <property type="match status" value="1"/>
</dbReference>
<dbReference type="Gene3D" id="3.60.15.10">
    <property type="entry name" value="Ribonuclease Z/Hydroxyacylglutathione hydrolase-like"/>
    <property type="match status" value="1"/>
</dbReference>
<dbReference type="HAMAP" id="MF_01374">
    <property type="entry name" value="Glyoxalase_2"/>
    <property type="match status" value="1"/>
</dbReference>
<dbReference type="InterPro" id="IPR035680">
    <property type="entry name" value="Clx_II_MBL"/>
</dbReference>
<dbReference type="InterPro" id="IPR032282">
    <property type="entry name" value="HAGH_C"/>
</dbReference>
<dbReference type="InterPro" id="IPR017782">
    <property type="entry name" value="Hydroxyacylglutathione_Hdrlase"/>
</dbReference>
<dbReference type="InterPro" id="IPR001279">
    <property type="entry name" value="Metallo-B-lactamas"/>
</dbReference>
<dbReference type="InterPro" id="IPR036866">
    <property type="entry name" value="RibonucZ/Hydroxyglut_hydro"/>
</dbReference>
<dbReference type="NCBIfam" id="TIGR03413">
    <property type="entry name" value="GSH_gloB"/>
    <property type="match status" value="1"/>
</dbReference>
<dbReference type="PANTHER" id="PTHR11935">
    <property type="entry name" value="BETA LACTAMASE DOMAIN"/>
    <property type="match status" value="1"/>
</dbReference>
<dbReference type="PANTHER" id="PTHR11935:SF116">
    <property type="entry name" value="HYDROLASE PNKD-RELATED"/>
    <property type="match status" value="1"/>
</dbReference>
<dbReference type="Pfam" id="PF16123">
    <property type="entry name" value="HAGH_C"/>
    <property type="match status" value="1"/>
</dbReference>
<dbReference type="Pfam" id="PF00753">
    <property type="entry name" value="Lactamase_B"/>
    <property type="match status" value="1"/>
</dbReference>
<dbReference type="SMART" id="SM00849">
    <property type="entry name" value="Lactamase_B"/>
    <property type="match status" value="1"/>
</dbReference>
<dbReference type="SUPFAM" id="SSF56281">
    <property type="entry name" value="Metallo-hydrolase/oxidoreductase"/>
    <property type="match status" value="1"/>
</dbReference>
<keyword id="KW-0025">Alternative splicing</keyword>
<keyword id="KW-1003">Cell membrane</keyword>
<keyword id="KW-0963">Cytoplasm</keyword>
<keyword id="KW-0225">Disease variant</keyword>
<keyword id="KW-1023">Dystonia</keyword>
<keyword id="KW-0256">Endoplasmic reticulum</keyword>
<keyword id="KW-0333">Golgi apparatus</keyword>
<keyword id="KW-0378">Hydrolase</keyword>
<keyword id="KW-0472">Membrane</keyword>
<keyword id="KW-0479">Metal-binding</keyword>
<keyword id="KW-0496">Mitochondrion</keyword>
<keyword id="KW-1267">Proteomics identification</keyword>
<keyword id="KW-1185">Reference proteome</keyword>
<keyword id="KW-0862">Zinc</keyword>
<accession>Q8N490</accession>
<accession>A8K1F2</accession>
<accession>Q96A48</accession>
<accession>Q9BU26</accession>
<accession>Q9NSX4</accession>
<accession>Q9ULN6</accession>
<accession>Q9Y4T1</accession>
<protein>
    <recommendedName>
        <fullName evidence="20">Probable thioesterase PNKD</fullName>
        <ecNumber evidence="20">3.1.2.-</ecNumber>
    </recommendedName>
    <alternativeName>
        <fullName>Myofibrillogenesis regulator 1</fullName>
        <shortName>MR-1</shortName>
    </alternativeName>
    <alternativeName>
        <fullName>Paroxysmal nonkinesiogenic dyskinesia protein</fullName>
    </alternativeName>
    <alternativeName>
        <fullName>Trans-activated by hepatitis C virus core protein 2</fullName>
    </alternativeName>
</protein>
<reference key="1">
    <citation type="journal article" date="2004" name="Acta Biochim. Biophys. Sin.">
        <title>Characterization of MR-1, a novel myofibrillogenesis regulator in human muscle.</title>
        <authorList>
            <person name="Li T.-B."/>
            <person name="Liu X.-H."/>
            <person name="Feng S."/>
            <person name="Hu Y."/>
            <person name="Yang W.-X."/>
            <person name="Han Y."/>
            <person name="Wang Y.-G."/>
            <person name="Gong L.-M."/>
        </authorList>
    </citation>
    <scope>NUCLEOTIDE SEQUENCE [MRNA] (ISOFORM 2)</scope>
    <scope>TISSUE SPECIFICITY</scope>
    <scope>INTERACTION WITH MRLC2; MYOM1 AND ENO3</scope>
</reference>
<reference key="2">
    <citation type="journal article" date="2004" name="World J. Gastroenterol.">
        <title>Transactivating effect of hepatitis C virus core protein: a suppression subtractive hybridization study.</title>
        <authorList>
            <person name="Liu M."/>
            <person name="Liu Y."/>
            <person name="Cheng J."/>
            <person name="Zhang S.-L."/>
            <person name="Wang L."/>
            <person name="Shao Q."/>
            <person name="Zhang J."/>
            <person name="Yang Q."/>
        </authorList>
    </citation>
    <scope>NUCLEOTIDE SEQUENCE [MRNA] (ISOFORM 2)</scope>
    <scope>INDUCTION</scope>
</reference>
<reference key="3">
    <citation type="submission" date="2000-10" db="EMBL/GenBank/DDBJ databases">
        <title>Cloning of FKSG19, a novel gene expressed in ovarian tumour tissue.</title>
        <authorList>
            <person name="Wang Y.-G."/>
            <person name="Gong L."/>
        </authorList>
    </citation>
    <scope>NUCLEOTIDE SEQUENCE [MRNA] (ISOFORM 2)</scope>
</reference>
<reference key="4">
    <citation type="submission" date="2001-06" db="EMBL/GenBank/DDBJ databases">
        <title>Identification of human genomic DNA structure of the gene trans-activated by hepatitis C virus core protein 2.</title>
        <authorList>
            <person name="Liu Y."/>
            <person name="Cheng J."/>
            <person name="Wang G."/>
            <person name="Li K."/>
            <person name="Dong J."/>
            <person name="Li L."/>
            <person name="Chen J."/>
            <person name="Zhang L."/>
        </authorList>
    </citation>
    <scope>NUCLEOTIDE SEQUENCE [GENOMIC DNA] (ISOFORM 2)</scope>
</reference>
<reference key="5">
    <citation type="journal article" date="2003" name="Genome Res.">
        <title>The secreted protein discovery initiative (SPDI), a large-scale effort to identify novel human secreted and transmembrane proteins: a bioinformatics assessment.</title>
        <authorList>
            <person name="Clark H.F."/>
            <person name="Gurney A.L."/>
            <person name="Abaya E."/>
            <person name="Baker K."/>
            <person name="Baldwin D.T."/>
            <person name="Brush J."/>
            <person name="Chen J."/>
            <person name="Chow B."/>
            <person name="Chui C."/>
            <person name="Crowley C."/>
            <person name="Currell B."/>
            <person name="Deuel B."/>
            <person name="Dowd P."/>
            <person name="Eaton D."/>
            <person name="Foster J.S."/>
            <person name="Grimaldi C."/>
            <person name="Gu Q."/>
            <person name="Hass P.E."/>
            <person name="Heldens S."/>
            <person name="Huang A."/>
            <person name="Kim H.S."/>
            <person name="Klimowski L."/>
            <person name="Jin Y."/>
            <person name="Johnson S."/>
            <person name="Lee J."/>
            <person name="Lewis L."/>
            <person name="Liao D."/>
            <person name="Mark M.R."/>
            <person name="Robbie E."/>
            <person name="Sanchez C."/>
            <person name="Schoenfeld J."/>
            <person name="Seshagiri S."/>
            <person name="Simmons L."/>
            <person name="Singh J."/>
            <person name="Smith V."/>
            <person name="Stinson J."/>
            <person name="Vagts A."/>
            <person name="Vandlen R.L."/>
            <person name="Watanabe C."/>
            <person name="Wieand D."/>
            <person name="Woods K."/>
            <person name="Xie M.-H."/>
            <person name="Yansura D.G."/>
            <person name="Yi S."/>
            <person name="Yu G."/>
            <person name="Yuan J."/>
            <person name="Zhang M."/>
            <person name="Zhang Z."/>
            <person name="Goddard A.D."/>
            <person name="Wood W.I."/>
            <person name="Godowski P.J."/>
            <person name="Gray A.M."/>
        </authorList>
    </citation>
    <scope>NUCLEOTIDE SEQUENCE [LARGE SCALE MRNA] (ISOFORM 3)</scope>
</reference>
<reference key="6">
    <citation type="journal article" date="2004" name="Nat. Genet.">
        <title>Complete sequencing and characterization of 21,243 full-length human cDNAs.</title>
        <authorList>
            <person name="Ota T."/>
            <person name="Suzuki Y."/>
            <person name="Nishikawa T."/>
            <person name="Otsuki T."/>
            <person name="Sugiyama T."/>
            <person name="Irie R."/>
            <person name="Wakamatsu A."/>
            <person name="Hayashi K."/>
            <person name="Sato H."/>
            <person name="Nagai K."/>
            <person name="Kimura K."/>
            <person name="Makita H."/>
            <person name="Sekine M."/>
            <person name="Obayashi M."/>
            <person name="Nishi T."/>
            <person name="Shibahara T."/>
            <person name="Tanaka T."/>
            <person name="Ishii S."/>
            <person name="Yamamoto J."/>
            <person name="Saito K."/>
            <person name="Kawai Y."/>
            <person name="Isono Y."/>
            <person name="Nakamura Y."/>
            <person name="Nagahari K."/>
            <person name="Murakami K."/>
            <person name="Yasuda T."/>
            <person name="Iwayanagi T."/>
            <person name="Wagatsuma M."/>
            <person name="Shiratori A."/>
            <person name="Sudo H."/>
            <person name="Hosoiri T."/>
            <person name="Kaku Y."/>
            <person name="Kodaira H."/>
            <person name="Kondo H."/>
            <person name="Sugawara M."/>
            <person name="Takahashi M."/>
            <person name="Kanda K."/>
            <person name="Yokoi T."/>
            <person name="Furuya T."/>
            <person name="Kikkawa E."/>
            <person name="Omura Y."/>
            <person name="Abe K."/>
            <person name="Kamihara K."/>
            <person name="Katsuta N."/>
            <person name="Sato K."/>
            <person name="Tanikawa M."/>
            <person name="Yamazaki M."/>
            <person name="Ninomiya K."/>
            <person name="Ishibashi T."/>
            <person name="Yamashita H."/>
            <person name="Murakawa K."/>
            <person name="Fujimori K."/>
            <person name="Tanai H."/>
            <person name="Kimata M."/>
            <person name="Watanabe M."/>
            <person name="Hiraoka S."/>
            <person name="Chiba Y."/>
            <person name="Ishida S."/>
            <person name="Ono Y."/>
            <person name="Takiguchi S."/>
            <person name="Watanabe S."/>
            <person name="Yosida M."/>
            <person name="Hotuta T."/>
            <person name="Kusano J."/>
            <person name="Kanehori K."/>
            <person name="Takahashi-Fujii A."/>
            <person name="Hara H."/>
            <person name="Tanase T.-O."/>
            <person name="Nomura Y."/>
            <person name="Togiya S."/>
            <person name="Komai F."/>
            <person name="Hara R."/>
            <person name="Takeuchi K."/>
            <person name="Arita M."/>
            <person name="Imose N."/>
            <person name="Musashino K."/>
            <person name="Yuuki H."/>
            <person name="Oshima A."/>
            <person name="Sasaki N."/>
            <person name="Aotsuka S."/>
            <person name="Yoshikawa Y."/>
            <person name="Matsunawa H."/>
            <person name="Ichihara T."/>
            <person name="Shiohata N."/>
            <person name="Sano S."/>
            <person name="Moriya S."/>
            <person name="Momiyama H."/>
            <person name="Satoh N."/>
            <person name="Takami S."/>
            <person name="Terashima Y."/>
            <person name="Suzuki O."/>
            <person name="Nakagawa S."/>
            <person name="Senoh A."/>
            <person name="Mizoguchi H."/>
            <person name="Goto Y."/>
            <person name="Shimizu F."/>
            <person name="Wakebe H."/>
            <person name="Hishigaki H."/>
            <person name="Watanabe T."/>
            <person name="Sugiyama A."/>
            <person name="Takemoto M."/>
            <person name="Kawakami B."/>
            <person name="Yamazaki M."/>
            <person name="Watanabe K."/>
            <person name="Kumagai A."/>
            <person name="Itakura S."/>
            <person name="Fukuzumi Y."/>
            <person name="Fujimori Y."/>
            <person name="Komiyama M."/>
            <person name="Tashiro H."/>
            <person name="Tanigami A."/>
            <person name="Fujiwara T."/>
            <person name="Ono T."/>
            <person name="Yamada K."/>
            <person name="Fujii Y."/>
            <person name="Ozaki K."/>
            <person name="Hirao M."/>
            <person name="Ohmori Y."/>
            <person name="Kawabata A."/>
            <person name="Hikiji T."/>
            <person name="Kobatake N."/>
            <person name="Inagaki H."/>
            <person name="Ikema Y."/>
            <person name="Okamoto S."/>
            <person name="Okitani R."/>
            <person name="Kawakami T."/>
            <person name="Noguchi S."/>
            <person name="Itoh T."/>
            <person name="Shigeta K."/>
            <person name="Senba T."/>
            <person name="Matsumura K."/>
            <person name="Nakajima Y."/>
            <person name="Mizuno T."/>
            <person name="Morinaga M."/>
            <person name="Sasaki M."/>
            <person name="Togashi T."/>
            <person name="Oyama M."/>
            <person name="Hata H."/>
            <person name="Watanabe M."/>
            <person name="Komatsu T."/>
            <person name="Mizushima-Sugano J."/>
            <person name="Satoh T."/>
            <person name="Shirai Y."/>
            <person name="Takahashi Y."/>
            <person name="Nakagawa K."/>
            <person name="Okumura K."/>
            <person name="Nagase T."/>
            <person name="Nomura N."/>
            <person name="Kikuchi H."/>
            <person name="Masuho Y."/>
            <person name="Yamashita R."/>
            <person name="Nakai K."/>
            <person name="Yada T."/>
            <person name="Nakamura Y."/>
            <person name="Ohara O."/>
            <person name="Isogai T."/>
            <person name="Sugano S."/>
        </authorList>
    </citation>
    <scope>NUCLEOTIDE SEQUENCE [LARGE SCALE MRNA] (ISOFORM 1)</scope>
    <source>
        <tissue>Caudate nucleus</tissue>
    </source>
</reference>
<reference key="7">
    <citation type="journal article" date="2007" name="BMC Genomics">
        <title>The full-ORF clone resource of the German cDNA consortium.</title>
        <authorList>
            <person name="Bechtel S."/>
            <person name="Rosenfelder H."/>
            <person name="Duda A."/>
            <person name="Schmidt C.P."/>
            <person name="Ernst U."/>
            <person name="Wellenreuther R."/>
            <person name="Mehrle A."/>
            <person name="Schuster C."/>
            <person name="Bahr A."/>
            <person name="Bloecker H."/>
            <person name="Heubner D."/>
            <person name="Hoerlein A."/>
            <person name="Michel G."/>
            <person name="Wedler H."/>
            <person name="Koehrer K."/>
            <person name="Ottenwaelder B."/>
            <person name="Poustka A."/>
            <person name="Wiemann S."/>
            <person name="Schupp I."/>
        </authorList>
    </citation>
    <scope>NUCLEOTIDE SEQUENCE [LARGE SCALE MRNA] (ISOFORMS 2 AND 4)</scope>
    <source>
        <tissue>Brain</tissue>
    </source>
</reference>
<reference key="8">
    <citation type="submission" date="2005-07" db="EMBL/GenBank/DDBJ databases">
        <authorList>
            <person name="Mural R.J."/>
            <person name="Istrail S."/>
            <person name="Sutton G.G."/>
            <person name="Florea L."/>
            <person name="Halpern A.L."/>
            <person name="Mobarry C.M."/>
            <person name="Lippert R."/>
            <person name="Walenz B."/>
            <person name="Shatkay H."/>
            <person name="Dew I."/>
            <person name="Miller J.R."/>
            <person name="Flanigan M.J."/>
            <person name="Edwards N.J."/>
            <person name="Bolanos R."/>
            <person name="Fasulo D."/>
            <person name="Halldorsson B.V."/>
            <person name="Hannenhalli S."/>
            <person name="Turner R."/>
            <person name="Yooseph S."/>
            <person name="Lu F."/>
            <person name="Nusskern D.R."/>
            <person name="Shue B.C."/>
            <person name="Zheng X.H."/>
            <person name="Zhong F."/>
            <person name="Delcher A.L."/>
            <person name="Huson D.H."/>
            <person name="Kravitz S.A."/>
            <person name="Mouchard L."/>
            <person name="Reinert K."/>
            <person name="Remington K.A."/>
            <person name="Clark A.G."/>
            <person name="Waterman M.S."/>
            <person name="Eichler E.E."/>
            <person name="Adams M.D."/>
            <person name="Hunkapiller M.W."/>
            <person name="Myers E.W."/>
            <person name="Venter J.C."/>
        </authorList>
    </citation>
    <scope>NUCLEOTIDE SEQUENCE [LARGE SCALE GENOMIC DNA]</scope>
</reference>
<reference key="9">
    <citation type="journal article" date="2004" name="Genome Res.">
        <title>The status, quality, and expansion of the NIH full-length cDNA project: the Mammalian Gene Collection (MGC).</title>
        <authorList>
            <consortium name="The MGC Project Team"/>
        </authorList>
    </citation>
    <scope>NUCLEOTIDE SEQUENCE [LARGE SCALE MRNA] (ISOFORMS 1; 2 AND 3)</scope>
    <source>
        <tissue>Brain</tissue>
    </source>
</reference>
<reference key="10">
    <citation type="journal article" date="1999" name="DNA Res.">
        <title>Characterization of cDNA clones selected by the GeneMark analysis from size-fractionated cDNA libraries from human brain.</title>
        <authorList>
            <person name="Hirosawa M."/>
            <person name="Nagase T."/>
            <person name="Ishikawa K."/>
            <person name="Kikuno R."/>
            <person name="Nomura N."/>
            <person name="Ohara O."/>
        </authorList>
    </citation>
    <scope>NUCLEOTIDE SEQUENCE [LARGE SCALE MRNA] OF 6-385 (ISOFORM 1)</scope>
    <source>
        <tissue>Brain</tissue>
    </source>
</reference>
<reference key="11">
    <citation type="journal article" date="2004" name="Hum. Mol. Genet.">
        <title>The gene for paroxysmal non-kinesigenic dyskinesia encodes an enzyme in a stress response pathway.</title>
        <authorList>
            <person name="Lee H.-Y."/>
            <person name="Xu Y."/>
            <person name="Huang Y."/>
            <person name="Ahn A.H."/>
            <person name="Auburger G.W."/>
            <person name="Pandolfo M."/>
            <person name="Kwiecinski H."/>
            <person name="Grimes D.A."/>
            <person name="Lang A.E."/>
            <person name="Nielsen J.E."/>
            <person name="Averyanov Y."/>
            <person name="Servidei S."/>
            <person name="Friedman A."/>
            <person name="Van Bogaert P."/>
            <person name="Abramowicz M.J."/>
            <person name="Bruno M.K."/>
            <person name="Sorensen B.F."/>
            <person name="Tang L."/>
            <person name="Fu Y.-H."/>
            <person name="Ptacek L.J."/>
        </authorList>
    </citation>
    <scope>TISSUE SPECIFICITY</scope>
    <scope>SUBCELLULAR LOCATION</scope>
    <scope>ALTERNATIVE SPLICING</scope>
</reference>
<reference key="12">
    <citation type="journal article" date="2007" name="Science">
        <title>ATM and ATR substrate analysis reveals extensive protein networks responsive to DNA damage.</title>
        <authorList>
            <person name="Matsuoka S."/>
            <person name="Ballif B.A."/>
            <person name="Smogorzewska A."/>
            <person name="McDonald E.R. III"/>
            <person name="Hurov K.E."/>
            <person name="Luo J."/>
            <person name="Bakalarski C.E."/>
            <person name="Zhao Z."/>
            <person name="Solimini N."/>
            <person name="Lerenthal Y."/>
            <person name="Shiloh Y."/>
            <person name="Gygi S.P."/>
            <person name="Elledge S.J."/>
        </authorList>
    </citation>
    <scope>IDENTIFICATION BY MASS SPECTROMETRY [LARGE SCALE ANALYSIS]</scope>
    <source>
        <tissue>Embryonic kidney</tissue>
    </source>
</reference>
<reference key="13">
    <citation type="journal article" date="2008" name="Mol. Cell">
        <title>Kinase-selective enrichment enables quantitative phosphoproteomics of the kinome across the cell cycle.</title>
        <authorList>
            <person name="Daub H."/>
            <person name="Olsen J.V."/>
            <person name="Bairlein M."/>
            <person name="Gnad F."/>
            <person name="Oppermann F.S."/>
            <person name="Korner R."/>
            <person name="Greff Z."/>
            <person name="Keri G."/>
            <person name="Stemmann O."/>
            <person name="Mann M."/>
        </authorList>
    </citation>
    <scope>IDENTIFICATION BY MASS SPECTROMETRY [LARGE SCALE ANALYSIS]</scope>
    <source>
        <tissue>Cervix carcinoma</tissue>
    </source>
</reference>
<reference key="14">
    <citation type="journal article" date="2011" name="BMC Syst. Biol.">
        <title>Initial characterization of the human central proteome.</title>
        <authorList>
            <person name="Burkard T.R."/>
            <person name="Planyavsky M."/>
            <person name="Kaupe I."/>
            <person name="Breitwieser F.P."/>
            <person name="Buerckstuemmer T."/>
            <person name="Bennett K.L."/>
            <person name="Superti-Furga G."/>
            <person name="Colinge J."/>
        </authorList>
    </citation>
    <scope>IDENTIFICATION BY MASS SPECTROMETRY [LARGE SCALE ANALYSIS]</scope>
</reference>
<reference key="15">
    <citation type="journal article" date="2014" name="J. Proteomics">
        <title>An enzyme assisted RP-RPLC approach for in-depth analysis of human liver phosphoproteome.</title>
        <authorList>
            <person name="Bian Y."/>
            <person name="Song C."/>
            <person name="Cheng K."/>
            <person name="Dong M."/>
            <person name="Wang F."/>
            <person name="Huang J."/>
            <person name="Sun D."/>
            <person name="Wang L."/>
            <person name="Ye M."/>
            <person name="Zou H."/>
        </authorList>
    </citation>
    <scope>IDENTIFICATION BY MASS SPECTROMETRY [LARGE SCALE ANALYSIS]</scope>
    <source>
        <tissue>Liver</tissue>
    </source>
</reference>
<reference key="16">
    <citation type="journal article" date="2004" name="Arch. Neurol.">
        <title>Myofibrillogenesis regulator 1 gene mutations cause paroxysmal dystonic choreoathetosis.</title>
        <authorList>
            <person name="Rainier S."/>
            <person name="Thomas D."/>
            <person name="Tokarz D."/>
            <person name="Ming L."/>
            <person name="Bui M."/>
            <person name="Plein E."/>
            <person name="Zhao X."/>
            <person name="Lemons R."/>
            <person name="Albin R."/>
            <person name="Delaney C."/>
            <person name="Alvarado D."/>
            <person name="Fink J.K."/>
        </authorList>
    </citation>
    <scope>VARIANTS PNKD1 VAL-7 AND VAL-9</scope>
    <scope>TISSUE SPECIFICITY</scope>
</reference>
<reference key="17">
    <citation type="journal article" date="2005" name="Arch. Neurol.">
        <title>Presence of alanine-to-valine substitutions in myofibrillogenesis regulator 1 in paroxysmal nonkinesigenic dyskinesia: confirmation in 2 kindreds.</title>
        <authorList>
            <person name="Chen D.-H."/>
            <person name="Matsushita M."/>
            <person name="Rainier S."/>
            <person name="Meaney B."/>
            <person name="Tisch L."/>
            <person name="Feleke A."/>
            <person name="Wolff J."/>
            <person name="Lipe H."/>
            <person name="Fink J."/>
            <person name="Bird T.D."/>
            <person name="Raskind W.H."/>
        </authorList>
    </citation>
    <scope>VARIANTS PNKD1 VAL-7 AND VAL-9</scope>
</reference>
<reference key="18">
    <citation type="journal article" date="2006" name="Mov. Disord.">
        <title>Clinical characteristics of paroxysmal nonkinesigenic dyskinesia in Serbian family with Myofibrillogenesis regulator 1 gene mutation.</title>
        <authorList>
            <person name="Stefanova E."/>
            <person name="Djarmati A."/>
            <person name="Momcilovic D."/>
            <person name="Dragasevic N."/>
            <person name="Svetel M."/>
            <person name="Klein C."/>
            <person name="Kostic V.S."/>
        </authorList>
    </citation>
    <scope>VARIANT PNKD1 VAL-9</scope>
</reference>
<reference key="19">
    <citation type="journal article" date="2006" name="Neurosci. Lett.">
        <title>Myofibrillogenesis regulator 1 gene (MR-1) mutation in an Omani family with paroxysmal nonkinesigenic dyskinesia.</title>
        <authorList>
            <person name="Hempelmann A."/>
            <person name="Kumar S."/>
            <person name="Muralitharan S."/>
            <person name="Sander T."/>
        </authorList>
    </citation>
    <scope>VARIANT PNKD1 VAL-7</scope>
</reference>
<reference key="20">
    <citation type="journal article" date="2009" name="Hum. Mol. Genet.">
        <title>Paroxysmal non-kinesigenic dyskinesia is caused by mutations of the MR-1 mitochondrial targeting sequence.</title>
        <authorList>
            <person name="Ghezzi D."/>
            <person name="Viscomi C."/>
            <person name="Ferlini A."/>
            <person name="Gualandi F."/>
            <person name="Mereghetti P."/>
            <person name="DeGrandis D."/>
            <person name="Zeviani M."/>
        </authorList>
    </citation>
    <scope>VARIANT PNKD1 PRO-33</scope>
    <scope>SUBCELLULAR LOCATION</scope>
</reference>
<reference key="21">
    <citation type="journal article" date="2011" name="Hum. Mol. Genet.">
        <title>Mutations in PNKD causing paroxysmal dyskinesia alters protein cleavage and stability.</title>
        <authorList>
            <person name="Shen Y."/>
            <person name="Lee H.Y."/>
            <person name="Rawson J."/>
            <person name="Ojha S."/>
            <person name="Babbitt P."/>
            <person name="Fu Y.H."/>
            <person name="Ptacek L.J."/>
        </authorList>
    </citation>
    <scope>CHARACTERIZATION OF VARIANT PNKD1 PRO-33</scope>
    <scope>CHARACTERIZATION OF VARIANT GLY-16</scope>
    <scope>FUNCTION</scope>
    <scope>SUBCELLULAR LOCATION</scope>
    <scope>MUTAGENESIS OF ALA-15</scope>
</reference>
<reference key="22">
    <citation type="journal article" date="2019" name="Parkinsonism Relat. Disord.">
        <title>Progressive nonparoxysmal chorea and dystonia due to myofibrillogenesis regulator-1 gene mutation.</title>
        <authorList>
            <person name="Pandey S."/>
            <person name="Tomar L.R."/>
            <person name="Mahadevan L."/>
        </authorList>
    </citation>
    <scope>VARIANT PNKD1 PRO-33</scope>
</reference>
<feature type="chain" id="PRO_0000299549" description="Probable thioesterase PNKD">
    <location>
        <begin position="1"/>
        <end position="385"/>
    </location>
</feature>
<feature type="region of interest" description="Disordered" evidence="2">
    <location>
        <begin position="32"/>
        <end position="58"/>
    </location>
</feature>
<feature type="binding site" evidence="1">
    <location>
        <position position="172"/>
    </location>
    <ligand>
        <name>Zn(2+)</name>
        <dbReference type="ChEBI" id="CHEBI:29105"/>
        <label>1</label>
    </ligand>
</feature>
<feature type="binding site" evidence="1">
    <location>
        <position position="174"/>
    </location>
    <ligand>
        <name>Zn(2+)</name>
        <dbReference type="ChEBI" id="CHEBI:29105"/>
        <label>1</label>
    </ligand>
</feature>
<feature type="binding site" evidence="1">
    <location>
        <position position="176"/>
    </location>
    <ligand>
        <name>Zn(2+)</name>
        <dbReference type="ChEBI" id="CHEBI:29105"/>
        <label>2</label>
    </ligand>
</feature>
<feature type="binding site" evidence="1">
    <location>
        <position position="177"/>
    </location>
    <ligand>
        <name>Zn(2+)</name>
        <dbReference type="ChEBI" id="CHEBI:29105"/>
        <label>2</label>
    </ligand>
</feature>
<feature type="binding site" evidence="1">
    <location>
        <position position="229"/>
    </location>
    <ligand>
        <name>Zn(2+)</name>
        <dbReference type="ChEBI" id="CHEBI:29105"/>
        <label>1</label>
    </ligand>
</feature>
<feature type="binding site" evidence="1">
    <location>
        <position position="253"/>
    </location>
    <ligand>
        <name>Zn(2+)</name>
        <dbReference type="ChEBI" id="CHEBI:29105"/>
        <label>1</label>
    </ligand>
</feature>
<feature type="binding site" evidence="1">
    <location>
        <position position="253"/>
    </location>
    <ligand>
        <name>Zn(2+)</name>
        <dbReference type="ChEBI" id="CHEBI:29105"/>
        <label>2</label>
    </ligand>
</feature>
<feature type="binding site" evidence="1">
    <location>
        <position position="291"/>
    </location>
    <ligand>
        <name>Zn(2+)</name>
        <dbReference type="ChEBI" id="CHEBI:29105"/>
        <label>2</label>
    </ligand>
</feature>
<feature type="splice variant" id="VSP_027736" description="In isoform 3." evidence="13 16">
    <original>MAAVVAATALKGRGARNARVLRGILAGATANKASHNRTRALQSHSSPEGKEEPEPLSPELEYIPRKRGKNPMKAVGLAW</original>
    <variation>MAWQGWPAAWQWVAGCWLLLVLVLVLLVSPRGCRARRGLRGLLMAHSQRLLFRIG</variation>
    <location>
        <begin position="1"/>
        <end position="79"/>
    </location>
</feature>
<feature type="splice variant" id="VSP_027737" description="In isoform 4." evidence="17">
    <location>
        <begin position="1"/>
        <end position="60"/>
    </location>
</feature>
<feature type="splice variant" id="VSP_027738" description="In isoform 4." evidence="17">
    <original>EYIPRKRGKNPMKAVGLA</original>
    <variation>MPSSVHHTKRQMMSIYCY</variation>
    <location>
        <begin position="61"/>
        <end position="78"/>
    </location>
</feature>
<feature type="splice variant" id="VSP_027739" description="In isoform 2." evidence="14 15 16 17 18">
    <original>YSLYTRTWLGYLFYRQQLRRARNRYPKGHSKTQPRLFNGVKVLPIPVLSDNYSYLIIDTQAQL</original>
    <variation>AIGFPCGILLFILTKREVDKDRVKQMKARQNMRLSNTGEYESQRFRASSQSAPSPDVGSGVQT</variation>
    <location>
        <begin position="80"/>
        <end position="142"/>
    </location>
</feature>
<feature type="splice variant" id="VSP_027740" description="In isoform 2." evidence="14 15 16 17 18">
    <location>
        <begin position="143"/>
        <end position="385"/>
    </location>
</feature>
<feature type="sequence variant" id="VAR_034844" description="In PNKD1; dbSNP:rs121434512." evidence="5 7 8">
    <original>A</original>
    <variation>V</variation>
    <location>
        <position position="7"/>
    </location>
</feature>
<feature type="sequence variant" id="VAR_034845" description="In PNKD1; dbSNP:rs121434511." evidence="5 7 9">
    <original>A</original>
    <variation>V</variation>
    <location>
        <position position="9"/>
    </location>
</feature>
<feature type="sequence variant" id="VAR_090117" description="The mutant is not cleaved at the N-terminus; dbSNP:rs934430255." evidence="11">
    <original>R</original>
    <variation>G</variation>
    <location>
        <position position="16"/>
    </location>
</feature>
<feature type="sequence variant" id="VAR_090118" description="In PNKD1; uncertain significance; the mutant is not cleaved at the N-terminus; results in increased protein degradation; dbSNP:rs121434513." evidence="10 11 12">
    <original>A</original>
    <variation>P</variation>
    <location>
        <position position="33"/>
    </location>
</feature>
<feature type="mutagenesis site" description="The mutant is not cleaved at the N-terminus. Results in increased protein degradation." evidence="11">
    <original>A</original>
    <variation>G</variation>
    <location>
        <position position="15"/>
    </location>
</feature>
<feature type="sequence conflict" description="In Ref. 9; AAH36457." evidence="19" ref="9">
    <original>G</original>
    <variation>S</variation>
    <location>
        <position position="12"/>
    </location>
</feature>
<feature type="sequence conflict" description="In Ref. 9; AAH36457." evidence="19" ref="9">
    <original>A</original>
    <variation>V</variation>
    <location>
        <position position="33"/>
    </location>
</feature>
<feature type="sequence conflict" description="In Ref. 9; AAH36457." evidence="19" ref="9">
    <original>P</original>
    <variation>S</variation>
    <location>
        <position position="47"/>
    </location>
</feature>
<feature type="sequence conflict" description="In Ref. 7; CAB70870." evidence="19" ref="7">
    <original>R</original>
    <variation>L</variation>
    <location>
        <position position="377"/>
    </location>
</feature>
<name>PNKD_HUMAN</name>